<name>LFTR_LEGPL</name>
<accession>Q5WVS9</accession>
<organism>
    <name type="scientific">Legionella pneumophila (strain Lens)</name>
    <dbReference type="NCBI Taxonomy" id="297245"/>
    <lineage>
        <taxon>Bacteria</taxon>
        <taxon>Pseudomonadati</taxon>
        <taxon>Pseudomonadota</taxon>
        <taxon>Gammaproteobacteria</taxon>
        <taxon>Legionellales</taxon>
        <taxon>Legionellaceae</taxon>
        <taxon>Legionella</taxon>
    </lineage>
</organism>
<keyword id="KW-0012">Acyltransferase</keyword>
<keyword id="KW-0963">Cytoplasm</keyword>
<keyword id="KW-0808">Transferase</keyword>
<comment type="function">
    <text evidence="1">Functions in the N-end rule pathway of protein degradation where it conjugates Leu, Phe and, less efficiently, Met from aminoacyl-tRNAs to the N-termini of proteins containing an N-terminal arginine or lysine.</text>
</comment>
<comment type="catalytic activity">
    <reaction evidence="1">
        <text>N-terminal L-lysyl-[protein] + L-leucyl-tRNA(Leu) = N-terminal L-leucyl-L-lysyl-[protein] + tRNA(Leu) + H(+)</text>
        <dbReference type="Rhea" id="RHEA:12340"/>
        <dbReference type="Rhea" id="RHEA-COMP:9613"/>
        <dbReference type="Rhea" id="RHEA-COMP:9622"/>
        <dbReference type="Rhea" id="RHEA-COMP:12670"/>
        <dbReference type="Rhea" id="RHEA-COMP:12671"/>
        <dbReference type="ChEBI" id="CHEBI:15378"/>
        <dbReference type="ChEBI" id="CHEBI:65249"/>
        <dbReference type="ChEBI" id="CHEBI:78442"/>
        <dbReference type="ChEBI" id="CHEBI:78494"/>
        <dbReference type="ChEBI" id="CHEBI:133043"/>
        <dbReference type="EC" id="2.3.2.6"/>
    </reaction>
</comment>
<comment type="catalytic activity">
    <reaction evidence="1">
        <text>N-terminal L-arginyl-[protein] + L-leucyl-tRNA(Leu) = N-terminal L-leucyl-L-arginyl-[protein] + tRNA(Leu) + H(+)</text>
        <dbReference type="Rhea" id="RHEA:50416"/>
        <dbReference type="Rhea" id="RHEA-COMP:9613"/>
        <dbReference type="Rhea" id="RHEA-COMP:9622"/>
        <dbReference type="Rhea" id="RHEA-COMP:12672"/>
        <dbReference type="Rhea" id="RHEA-COMP:12673"/>
        <dbReference type="ChEBI" id="CHEBI:15378"/>
        <dbReference type="ChEBI" id="CHEBI:64719"/>
        <dbReference type="ChEBI" id="CHEBI:78442"/>
        <dbReference type="ChEBI" id="CHEBI:78494"/>
        <dbReference type="ChEBI" id="CHEBI:133044"/>
        <dbReference type="EC" id="2.3.2.6"/>
    </reaction>
</comment>
<comment type="catalytic activity">
    <reaction evidence="1">
        <text>L-phenylalanyl-tRNA(Phe) + an N-terminal L-alpha-aminoacyl-[protein] = an N-terminal L-phenylalanyl-L-alpha-aminoacyl-[protein] + tRNA(Phe)</text>
        <dbReference type="Rhea" id="RHEA:43632"/>
        <dbReference type="Rhea" id="RHEA-COMP:9668"/>
        <dbReference type="Rhea" id="RHEA-COMP:9699"/>
        <dbReference type="Rhea" id="RHEA-COMP:10636"/>
        <dbReference type="Rhea" id="RHEA-COMP:10637"/>
        <dbReference type="ChEBI" id="CHEBI:78442"/>
        <dbReference type="ChEBI" id="CHEBI:78531"/>
        <dbReference type="ChEBI" id="CHEBI:78597"/>
        <dbReference type="ChEBI" id="CHEBI:83561"/>
        <dbReference type="EC" id="2.3.2.6"/>
    </reaction>
</comment>
<comment type="subcellular location">
    <subcellularLocation>
        <location evidence="1">Cytoplasm</location>
    </subcellularLocation>
</comment>
<comment type="similarity">
    <text evidence="1">Belongs to the L/F-transferase family.</text>
</comment>
<proteinExistence type="inferred from homology"/>
<gene>
    <name evidence="1" type="primary">aat</name>
    <name type="ordered locus">lpl1732</name>
</gene>
<reference key="1">
    <citation type="journal article" date="2004" name="Nat. Genet.">
        <title>Evidence in the Legionella pneumophila genome for exploitation of host cell functions and high genome plasticity.</title>
        <authorList>
            <person name="Cazalet C."/>
            <person name="Rusniok C."/>
            <person name="Brueggemann H."/>
            <person name="Zidane N."/>
            <person name="Magnier A."/>
            <person name="Ma L."/>
            <person name="Tichit M."/>
            <person name="Jarraud S."/>
            <person name="Bouchier C."/>
            <person name="Vandenesch F."/>
            <person name="Kunst F."/>
            <person name="Etienne J."/>
            <person name="Glaser P."/>
            <person name="Buchrieser C."/>
        </authorList>
    </citation>
    <scope>NUCLEOTIDE SEQUENCE [LARGE SCALE GENOMIC DNA]</scope>
    <source>
        <strain>Lens</strain>
    </source>
</reference>
<sequence>MAYDSNYTFPDPETSDKQGLLAIGGVLTPKRVLQAYSQGIFPWYEPGNPVLWWSPNPRLILIPNEFKISRSLKKTLKKPFKLTVDTAFQRVISYCATCSDRANKTWITSEMIETYTQLHEMGYAHSFEIWDGSELVGGLYGISLGHAFFGESMFHTITDASKVALHFLCSIMQSWNFDFIDCQLPTLHLMRLGAKIISRKEFLHMLQETLKYPDKKGNWSVN</sequence>
<feature type="chain" id="PRO_0000207225" description="Leucyl/phenylalanyl-tRNA--protein transferase">
    <location>
        <begin position="1"/>
        <end position="222"/>
    </location>
</feature>
<protein>
    <recommendedName>
        <fullName evidence="1">Leucyl/phenylalanyl-tRNA--protein transferase</fullName>
        <ecNumber evidence="1">2.3.2.6</ecNumber>
    </recommendedName>
    <alternativeName>
        <fullName evidence="1">L/F-transferase</fullName>
    </alternativeName>
    <alternativeName>
        <fullName evidence="1">Leucyltransferase</fullName>
    </alternativeName>
    <alternativeName>
        <fullName evidence="1">Phenyalanyltransferase</fullName>
    </alternativeName>
</protein>
<dbReference type="EC" id="2.3.2.6" evidence="1"/>
<dbReference type="EMBL" id="CR628337">
    <property type="protein sequence ID" value="CAH15971.1"/>
    <property type="molecule type" value="Genomic_DNA"/>
</dbReference>
<dbReference type="RefSeq" id="WP_011215744.1">
    <property type="nucleotide sequence ID" value="NC_006369.1"/>
</dbReference>
<dbReference type="SMR" id="Q5WVS9"/>
<dbReference type="KEGG" id="lpf:lpl1732"/>
<dbReference type="LegioList" id="lpl1732"/>
<dbReference type="HOGENOM" id="CLU_075045_0_0_6"/>
<dbReference type="Proteomes" id="UP000002517">
    <property type="component" value="Chromosome"/>
</dbReference>
<dbReference type="GO" id="GO:0005737">
    <property type="term" value="C:cytoplasm"/>
    <property type="evidence" value="ECO:0007669"/>
    <property type="project" value="UniProtKB-SubCell"/>
</dbReference>
<dbReference type="GO" id="GO:0008914">
    <property type="term" value="F:leucyl-tRNA--protein transferase activity"/>
    <property type="evidence" value="ECO:0007669"/>
    <property type="project" value="UniProtKB-UniRule"/>
</dbReference>
<dbReference type="GO" id="GO:0030163">
    <property type="term" value="P:protein catabolic process"/>
    <property type="evidence" value="ECO:0007669"/>
    <property type="project" value="UniProtKB-UniRule"/>
</dbReference>
<dbReference type="FunFam" id="3.30.70.3550:FF:000001">
    <property type="entry name" value="Leucyl/phenylalanyl-tRNA--protein transferase"/>
    <property type="match status" value="1"/>
</dbReference>
<dbReference type="FunFam" id="3.40.630.70:FF:000001">
    <property type="entry name" value="Leucyl/phenylalanyl-tRNA--protein transferase"/>
    <property type="match status" value="1"/>
</dbReference>
<dbReference type="Gene3D" id="3.40.630.70">
    <property type="entry name" value="Leucyl/phenylalanyl-tRNA-protein transferase, C-terminal domain"/>
    <property type="match status" value="1"/>
</dbReference>
<dbReference type="Gene3D" id="3.30.70.3550">
    <property type="entry name" value="Leucyl/phenylalanyl-tRNA-protein transferase, N-terminal domain"/>
    <property type="match status" value="1"/>
</dbReference>
<dbReference type="HAMAP" id="MF_00688">
    <property type="entry name" value="Leu_Phe_trans"/>
    <property type="match status" value="1"/>
</dbReference>
<dbReference type="InterPro" id="IPR016181">
    <property type="entry name" value="Acyl_CoA_acyltransferase"/>
</dbReference>
<dbReference type="InterPro" id="IPR004616">
    <property type="entry name" value="Leu/Phe-tRNA_Trfase"/>
</dbReference>
<dbReference type="InterPro" id="IPR042203">
    <property type="entry name" value="Leu/Phe-tRNA_Trfase_C"/>
</dbReference>
<dbReference type="InterPro" id="IPR042221">
    <property type="entry name" value="Leu/Phe-tRNA_Trfase_N"/>
</dbReference>
<dbReference type="NCBIfam" id="TIGR00667">
    <property type="entry name" value="aat"/>
    <property type="match status" value="1"/>
</dbReference>
<dbReference type="PANTHER" id="PTHR30098">
    <property type="entry name" value="LEUCYL/PHENYLALANYL-TRNA--PROTEIN TRANSFERASE"/>
    <property type="match status" value="1"/>
</dbReference>
<dbReference type="PANTHER" id="PTHR30098:SF2">
    <property type="entry name" value="LEUCYL_PHENYLALANYL-TRNA--PROTEIN TRANSFERASE"/>
    <property type="match status" value="1"/>
</dbReference>
<dbReference type="Pfam" id="PF03588">
    <property type="entry name" value="Leu_Phe_trans"/>
    <property type="match status" value="1"/>
</dbReference>
<dbReference type="SUPFAM" id="SSF55729">
    <property type="entry name" value="Acyl-CoA N-acyltransferases (Nat)"/>
    <property type="match status" value="1"/>
</dbReference>
<evidence type="ECO:0000255" key="1">
    <source>
        <dbReference type="HAMAP-Rule" id="MF_00688"/>
    </source>
</evidence>